<dbReference type="EMBL" id="CP000813">
    <property type="protein sequence ID" value="ABV62943.1"/>
    <property type="molecule type" value="Genomic_DNA"/>
</dbReference>
<dbReference type="RefSeq" id="WP_003152957.1">
    <property type="nucleotide sequence ID" value="NZ_VEIS01000005.1"/>
</dbReference>
<dbReference type="SMR" id="A8FFC6"/>
<dbReference type="STRING" id="315750.BPUM_2274"/>
<dbReference type="GeneID" id="93683773"/>
<dbReference type="KEGG" id="bpu:BPUM_2274"/>
<dbReference type="eggNOG" id="COG0828">
    <property type="taxonomic scope" value="Bacteria"/>
</dbReference>
<dbReference type="HOGENOM" id="CLU_159258_3_2_9"/>
<dbReference type="OrthoDB" id="9799244at2"/>
<dbReference type="Proteomes" id="UP000001355">
    <property type="component" value="Chromosome"/>
</dbReference>
<dbReference type="GO" id="GO:1990904">
    <property type="term" value="C:ribonucleoprotein complex"/>
    <property type="evidence" value="ECO:0007669"/>
    <property type="project" value="UniProtKB-KW"/>
</dbReference>
<dbReference type="GO" id="GO:0005840">
    <property type="term" value="C:ribosome"/>
    <property type="evidence" value="ECO:0007669"/>
    <property type="project" value="UniProtKB-KW"/>
</dbReference>
<dbReference type="GO" id="GO:0003735">
    <property type="term" value="F:structural constituent of ribosome"/>
    <property type="evidence" value="ECO:0007669"/>
    <property type="project" value="InterPro"/>
</dbReference>
<dbReference type="GO" id="GO:0006412">
    <property type="term" value="P:translation"/>
    <property type="evidence" value="ECO:0007669"/>
    <property type="project" value="UniProtKB-UniRule"/>
</dbReference>
<dbReference type="Gene3D" id="1.20.5.1150">
    <property type="entry name" value="Ribosomal protein S8"/>
    <property type="match status" value="1"/>
</dbReference>
<dbReference type="HAMAP" id="MF_00358">
    <property type="entry name" value="Ribosomal_bS21"/>
    <property type="match status" value="1"/>
</dbReference>
<dbReference type="InterPro" id="IPR001911">
    <property type="entry name" value="Ribosomal_bS21"/>
</dbReference>
<dbReference type="InterPro" id="IPR018278">
    <property type="entry name" value="Ribosomal_bS21_CS"/>
</dbReference>
<dbReference type="InterPro" id="IPR038380">
    <property type="entry name" value="Ribosomal_bS21_sf"/>
</dbReference>
<dbReference type="NCBIfam" id="TIGR00030">
    <property type="entry name" value="S21p"/>
    <property type="match status" value="1"/>
</dbReference>
<dbReference type="PANTHER" id="PTHR21109">
    <property type="entry name" value="MITOCHONDRIAL 28S RIBOSOMAL PROTEIN S21"/>
    <property type="match status" value="1"/>
</dbReference>
<dbReference type="PANTHER" id="PTHR21109:SF22">
    <property type="entry name" value="SMALL RIBOSOMAL SUBUNIT PROTEIN BS21"/>
    <property type="match status" value="1"/>
</dbReference>
<dbReference type="Pfam" id="PF01165">
    <property type="entry name" value="Ribosomal_S21"/>
    <property type="match status" value="1"/>
</dbReference>
<dbReference type="PRINTS" id="PR00976">
    <property type="entry name" value="RIBOSOMALS21"/>
</dbReference>
<dbReference type="PROSITE" id="PS01181">
    <property type="entry name" value="RIBOSOMAL_S21"/>
    <property type="match status" value="1"/>
</dbReference>
<accession>A8FFC6</accession>
<sequence length="57" mass="6830">MSKTVVRKNESLEDALRRFKRSVSKTGTLQEARKREFYEKPSVKRKKKSEAARKRKF</sequence>
<reference key="1">
    <citation type="journal article" date="2007" name="PLoS ONE">
        <title>Paradoxical DNA repair and peroxide resistance gene conservation in Bacillus pumilus SAFR-032.</title>
        <authorList>
            <person name="Gioia J."/>
            <person name="Yerrapragada S."/>
            <person name="Qin X."/>
            <person name="Jiang H."/>
            <person name="Igboeli O.C."/>
            <person name="Muzny D."/>
            <person name="Dugan-Rocha S."/>
            <person name="Ding Y."/>
            <person name="Hawes A."/>
            <person name="Liu W."/>
            <person name="Perez L."/>
            <person name="Kovar C."/>
            <person name="Dinh H."/>
            <person name="Lee S."/>
            <person name="Nazareth L."/>
            <person name="Blyth P."/>
            <person name="Holder M."/>
            <person name="Buhay C."/>
            <person name="Tirumalai M.R."/>
            <person name="Liu Y."/>
            <person name="Dasgupta I."/>
            <person name="Bokhetache L."/>
            <person name="Fujita M."/>
            <person name="Karouia F."/>
            <person name="Eswara Moorthy P."/>
            <person name="Siefert J."/>
            <person name="Uzman A."/>
            <person name="Buzumbo P."/>
            <person name="Verma A."/>
            <person name="Zwiya H."/>
            <person name="McWilliams B.D."/>
            <person name="Olowu A."/>
            <person name="Clinkenbeard K.D."/>
            <person name="Newcombe D."/>
            <person name="Golebiewski L."/>
            <person name="Petrosino J.F."/>
            <person name="Nicholson W.L."/>
            <person name="Fox G.E."/>
            <person name="Venkateswaran K."/>
            <person name="Highlander S.K."/>
            <person name="Weinstock G.M."/>
        </authorList>
    </citation>
    <scope>NUCLEOTIDE SEQUENCE [LARGE SCALE GENOMIC DNA]</scope>
    <source>
        <strain>SAFR-032</strain>
    </source>
</reference>
<keyword id="KW-0687">Ribonucleoprotein</keyword>
<keyword id="KW-0689">Ribosomal protein</keyword>
<comment type="similarity">
    <text evidence="1">Belongs to the bacterial ribosomal protein bS21 family.</text>
</comment>
<organism>
    <name type="scientific">Bacillus pumilus (strain SAFR-032)</name>
    <dbReference type="NCBI Taxonomy" id="315750"/>
    <lineage>
        <taxon>Bacteria</taxon>
        <taxon>Bacillati</taxon>
        <taxon>Bacillota</taxon>
        <taxon>Bacilli</taxon>
        <taxon>Bacillales</taxon>
        <taxon>Bacillaceae</taxon>
        <taxon>Bacillus</taxon>
    </lineage>
</organism>
<protein>
    <recommendedName>
        <fullName evidence="1">Small ribosomal subunit protein bS21</fullName>
    </recommendedName>
    <alternativeName>
        <fullName evidence="2">30S ribosomal protein S21</fullName>
    </alternativeName>
</protein>
<feature type="chain" id="PRO_1000059844" description="Small ribosomal subunit protein bS21">
    <location>
        <begin position="1"/>
        <end position="57"/>
    </location>
</feature>
<gene>
    <name evidence="1" type="primary">rpsU</name>
    <name type="ordered locus">BPUM_2274</name>
</gene>
<name>RS21_BACP2</name>
<proteinExistence type="inferred from homology"/>
<evidence type="ECO:0000255" key="1">
    <source>
        <dbReference type="HAMAP-Rule" id="MF_00358"/>
    </source>
</evidence>
<evidence type="ECO:0000305" key="2"/>